<gene>
    <name evidence="1" type="primary">cbpM</name>
    <name type="ordered locus">COXBURSA331_A1272</name>
</gene>
<evidence type="ECO:0000255" key="1">
    <source>
        <dbReference type="HAMAP-Rule" id="MF_01155"/>
    </source>
</evidence>
<feature type="chain" id="PRO_1000085344" description="Chaperone modulatory protein CbpM">
    <location>
        <begin position="1"/>
        <end position="106"/>
    </location>
</feature>
<proteinExistence type="inferred from homology"/>
<sequence length="106" mass="12380">MTKQIIKGIIIERSSPLKIDELSQAVHLRREIIIEMVEHRLIEPEGSSPTSWKFDNVCLKRAKIAASFYRDLEINMPGIAIALDLLDKIEHLEQRLRTLERFENQE</sequence>
<accession>A9NDK7</accession>
<organism>
    <name type="scientific">Coxiella burnetii (strain RSA 331 / Henzerling II)</name>
    <dbReference type="NCBI Taxonomy" id="360115"/>
    <lineage>
        <taxon>Bacteria</taxon>
        <taxon>Pseudomonadati</taxon>
        <taxon>Pseudomonadota</taxon>
        <taxon>Gammaproteobacteria</taxon>
        <taxon>Legionellales</taxon>
        <taxon>Coxiellaceae</taxon>
        <taxon>Coxiella</taxon>
    </lineage>
</organism>
<reference key="1">
    <citation type="submission" date="2007-11" db="EMBL/GenBank/DDBJ databases">
        <title>Genome sequencing of phylogenetically and phenotypically diverse Coxiella burnetii isolates.</title>
        <authorList>
            <person name="Seshadri R."/>
            <person name="Samuel J.E."/>
        </authorList>
    </citation>
    <scope>NUCLEOTIDE SEQUENCE [LARGE SCALE GENOMIC DNA]</scope>
    <source>
        <strain>RSA 331 / Henzerling II</strain>
    </source>
</reference>
<comment type="function">
    <text evidence="1">Interacts with CbpA and inhibits both the DnaJ-like co-chaperone activity and the DNA binding activity of CbpA. Together with CbpA, modulates the activity of the DnaK chaperone system. Does not inhibit the co-chaperone activity of DnaJ.</text>
</comment>
<comment type="similarity">
    <text evidence="1">Belongs to the CbpM family.</text>
</comment>
<protein>
    <recommendedName>
        <fullName evidence="1">Chaperone modulatory protein CbpM</fullName>
    </recommendedName>
</protein>
<name>CBPM_COXBR</name>
<dbReference type="EMBL" id="CP000890">
    <property type="protein sequence ID" value="ABX79067.1"/>
    <property type="molecule type" value="Genomic_DNA"/>
</dbReference>
<dbReference type="RefSeq" id="WP_005768409.1">
    <property type="nucleotide sequence ID" value="NC_010117.1"/>
</dbReference>
<dbReference type="SMR" id="A9NDK7"/>
<dbReference type="KEGG" id="cbs:COXBURSA331_A1272"/>
<dbReference type="HOGENOM" id="CLU_144710_3_0_6"/>
<dbReference type="Gene3D" id="1.10.1660.10">
    <property type="match status" value="1"/>
</dbReference>
<dbReference type="HAMAP" id="MF_01155">
    <property type="entry name" value="CbpM"/>
    <property type="match status" value="1"/>
</dbReference>
<dbReference type="InterPro" id="IPR022835">
    <property type="entry name" value="CbpM"/>
</dbReference>
<dbReference type="Pfam" id="PF13591">
    <property type="entry name" value="MerR_2"/>
    <property type="match status" value="1"/>
</dbReference>